<feature type="chain" id="PRO_0000276266" description="Protein PsbN">
    <location>
        <begin position="1"/>
        <end position="43"/>
    </location>
</feature>
<feature type="transmembrane region" description="Helical" evidence="1">
    <location>
        <begin position="7"/>
        <end position="27"/>
    </location>
</feature>
<geneLocation type="chloroplast"/>
<name>PSBN_COFAR</name>
<gene>
    <name evidence="1" type="primary">psbN</name>
</gene>
<organism>
    <name type="scientific">Coffea arabica</name>
    <name type="common">Arabian coffee</name>
    <dbReference type="NCBI Taxonomy" id="13443"/>
    <lineage>
        <taxon>Eukaryota</taxon>
        <taxon>Viridiplantae</taxon>
        <taxon>Streptophyta</taxon>
        <taxon>Embryophyta</taxon>
        <taxon>Tracheophyta</taxon>
        <taxon>Spermatophyta</taxon>
        <taxon>Magnoliopsida</taxon>
        <taxon>eudicotyledons</taxon>
        <taxon>Gunneridae</taxon>
        <taxon>Pentapetalae</taxon>
        <taxon>asterids</taxon>
        <taxon>lamiids</taxon>
        <taxon>Gentianales</taxon>
        <taxon>Rubiaceae</taxon>
        <taxon>Ixoroideae</taxon>
        <taxon>Gardenieae complex</taxon>
        <taxon>Bertiereae - Coffeeae clade</taxon>
        <taxon>Coffeeae</taxon>
        <taxon>Coffea</taxon>
    </lineage>
</organism>
<evidence type="ECO:0000255" key="1">
    <source>
        <dbReference type="HAMAP-Rule" id="MF_00293"/>
    </source>
</evidence>
<proteinExistence type="inferred from homology"/>
<keyword id="KW-0150">Chloroplast</keyword>
<keyword id="KW-0472">Membrane</keyword>
<keyword id="KW-0934">Plastid</keyword>
<keyword id="KW-1185">Reference proteome</keyword>
<keyword id="KW-0793">Thylakoid</keyword>
<keyword id="KW-0812">Transmembrane</keyword>
<keyword id="KW-1133">Transmembrane helix</keyword>
<sequence>METATLVAIFISGLLVSFTGYALYTAFGQPSQQLRDPFEEHGD</sequence>
<protein>
    <recommendedName>
        <fullName evidence="1">Protein PsbN</fullName>
    </recommendedName>
</protein>
<accession>A0A363</accession>
<reference key="1">
    <citation type="journal article" date="2007" name="Plant Biotechnol. J.">
        <title>The complete nucleotide sequence of the coffee (Coffea arabica L.) chloroplast genome: organization and implications for biotechnology and phylogenetic relationships amongst angiosperms.</title>
        <authorList>
            <person name="Samson N."/>
            <person name="Bausher M.G."/>
            <person name="Lee S.-B."/>
            <person name="Jansen R.K."/>
            <person name="Daniell H."/>
        </authorList>
    </citation>
    <scope>NUCLEOTIDE SEQUENCE [LARGE SCALE GENOMIC DNA]</scope>
</reference>
<comment type="function">
    <text evidence="1">May play a role in photosystem I and II biogenesis.</text>
</comment>
<comment type="subcellular location">
    <subcellularLocation>
        <location evidence="1">Plastid</location>
        <location evidence="1">Chloroplast thylakoid membrane</location>
        <topology evidence="1">Single-pass membrane protein</topology>
    </subcellularLocation>
</comment>
<comment type="similarity">
    <text evidence="1">Belongs to the PsbN family.</text>
</comment>
<comment type="caution">
    <text evidence="1">Originally thought to be a component of PSII; based on experiments in Synechocystis, N.tabacum and barley, and its absence from PSII in T.elongatus and T.vulcanus, this is probably not true.</text>
</comment>
<dbReference type="EMBL" id="EF044213">
    <property type="protein sequence ID" value="ABJ89706.1"/>
    <property type="molecule type" value="Genomic_DNA"/>
</dbReference>
<dbReference type="RefSeq" id="YP_817510.1">
    <property type="nucleotide sequence ID" value="NC_008535.1"/>
</dbReference>
<dbReference type="SMR" id="A0A363"/>
<dbReference type="GeneID" id="4421756"/>
<dbReference type="OrthoDB" id="1860403at2759"/>
<dbReference type="Proteomes" id="UP000515148">
    <property type="component" value="Chloroplast Pltd"/>
</dbReference>
<dbReference type="GO" id="GO:0009535">
    <property type="term" value="C:chloroplast thylakoid membrane"/>
    <property type="evidence" value="ECO:0007669"/>
    <property type="project" value="UniProtKB-SubCell"/>
</dbReference>
<dbReference type="GO" id="GO:0015979">
    <property type="term" value="P:photosynthesis"/>
    <property type="evidence" value="ECO:0007669"/>
    <property type="project" value="InterPro"/>
</dbReference>
<dbReference type="HAMAP" id="MF_00293">
    <property type="entry name" value="PSII_PsbN"/>
    <property type="match status" value="1"/>
</dbReference>
<dbReference type="InterPro" id="IPR003398">
    <property type="entry name" value="PSII_PsbN"/>
</dbReference>
<dbReference type="PANTHER" id="PTHR35326">
    <property type="entry name" value="PROTEIN PSBN"/>
    <property type="match status" value="1"/>
</dbReference>
<dbReference type="PANTHER" id="PTHR35326:SF3">
    <property type="entry name" value="PROTEIN PSBN"/>
    <property type="match status" value="1"/>
</dbReference>
<dbReference type="Pfam" id="PF02468">
    <property type="entry name" value="PsbN"/>
    <property type="match status" value="1"/>
</dbReference>